<evidence type="ECO:0000255" key="1">
    <source>
        <dbReference type="HAMAP-Rule" id="MF_01450"/>
    </source>
</evidence>
<organism>
    <name type="scientific">Yersinia pseudotuberculosis serotype I (strain IP32953)</name>
    <dbReference type="NCBI Taxonomy" id="273123"/>
    <lineage>
        <taxon>Bacteria</taxon>
        <taxon>Pseudomonadati</taxon>
        <taxon>Pseudomonadota</taxon>
        <taxon>Gammaproteobacteria</taxon>
        <taxon>Enterobacterales</taxon>
        <taxon>Yersiniaceae</taxon>
        <taxon>Yersinia</taxon>
    </lineage>
</organism>
<proteinExistence type="inferred from homology"/>
<sequence>MSKIYIVAYVYGVVQGVGFRYSTQRQAQQLGVTGYAKNCDDGSVEVVASGNPQAVERLMEWIRQGGPRGARVDRLLTEPYPPTPFETFSIRY</sequence>
<name>ACYP_YERPS</name>
<comment type="catalytic activity">
    <reaction evidence="1">
        <text>an acyl phosphate + H2O = a carboxylate + phosphate + H(+)</text>
        <dbReference type="Rhea" id="RHEA:14965"/>
        <dbReference type="ChEBI" id="CHEBI:15377"/>
        <dbReference type="ChEBI" id="CHEBI:15378"/>
        <dbReference type="ChEBI" id="CHEBI:29067"/>
        <dbReference type="ChEBI" id="CHEBI:43474"/>
        <dbReference type="ChEBI" id="CHEBI:59918"/>
        <dbReference type="EC" id="3.6.1.7"/>
    </reaction>
</comment>
<comment type="similarity">
    <text evidence="1">Belongs to the acylphosphatase family.</text>
</comment>
<feature type="chain" id="PRO_0000326853" description="Acylphosphatase">
    <location>
        <begin position="1"/>
        <end position="92"/>
    </location>
</feature>
<feature type="domain" description="Acylphosphatase-like" evidence="1">
    <location>
        <begin position="5"/>
        <end position="92"/>
    </location>
</feature>
<feature type="active site" evidence="1">
    <location>
        <position position="20"/>
    </location>
</feature>
<feature type="active site" evidence="1">
    <location>
        <position position="38"/>
    </location>
</feature>
<protein>
    <recommendedName>
        <fullName evidence="1">Acylphosphatase</fullName>
        <ecNumber evidence="1">3.6.1.7</ecNumber>
    </recommendedName>
    <alternativeName>
        <fullName evidence="1">Acylphosphate phosphohydrolase</fullName>
    </alternativeName>
</protein>
<gene>
    <name type="primary">acyP</name>
    <name type="ordered locus">YPTB1464</name>
</gene>
<dbReference type="EC" id="3.6.1.7" evidence="1"/>
<dbReference type="EMBL" id="BX936398">
    <property type="protein sequence ID" value="CAH20704.1"/>
    <property type="molecule type" value="Genomic_DNA"/>
</dbReference>
<dbReference type="SMR" id="Q66CD9"/>
<dbReference type="KEGG" id="ypo:BZ17_1054"/>
<dbReference type="KEGG" id="yps:YPTB1464"/>
<dbReference type="PATRIC" id="fig|273123.14.peg.1119"/>
<dbReference type="Proteomes" id="UP000001011">
    <property type="component" value="Chromosome"/>
</dbReference>
<dbReference type="GO" id="GO:0003998">
    <property type="term" value="F:acylphosphatase activity"/>
    <property type="evidence" value="ECO:0007669"/>
    <property type="project" value="UniProtKB-UniRule"/>
</dbReference>
<dbReference type="Gene3D" id="3.30.70.100">
    <property type="match status" value="1"/>
</dbReference>
<dbReference type="HAMAP" id="MF_01450">
    <property type="entry name" value="Acylphosphatase_entero"/>
    <property type="match status" value="1"/>
</dbReference>
<dbReference type="InterPro" id="IPR020456">
    <property type="entry name" value="Acylphosphatase"/>
</dbReference>
<dbReference type="InterPro" id="IPR001792">
    <property type="entry name" value="Acylphosphatase-like_dom"/>
</dbReference>
<dbReference type="InterPro" id="IPR036046">
    <property type="entry name" value="Acylphosphatase-like_dom_sf"/>
</dbReference>
<dbReference type="InterPro" id="IPR028627">
    <property type="entry name" value="Acylphosphatase_bac"/>
</dbReference>
<dbReference type="InterPro" id="IPR017968">
    <property type="entry name" value="Acylphosphatase_CS"/>
</dbReference>
<dbReference type="NCBIfam" id="NF011000">
    <property type="entry name" value="PRK14426.1"/>
    <property type="match status" value="1"/>
</dbReference>
<dbReference type="PANTHER" id="PTHR47268">
    <property type="entry name" value="ACYLPHOSPHATASE"/>
    <property type="match status" value="1"/>
</dbReference>
<dbReference type="PANTHER" id="PTHR47268:SF4">
    <property type="entry name" value="ACYLPHOSPHATASE"/>
    <property type="match status" value="1"/>
</dbReference>
<dbReference type="Pfam" id="PF00708">
    <property type="entry name" value="Acylphosphatase"/>
    <property type="match status" value="1"/>
</dbReference>
<dbReference type="PRINTS" id="PR00112">
    <property type="entry name" value="ACYLPHPHTASE"/>
</dbReference>
<dbReference type="SUPFAM" id="SSF54975">
    <property type="entry name" value="Acylphosphatase/BLUF domain-like"/>
    <property type="match status" value="1"/>
</dbReference>
<dbReference type="PROSITE" id="PS00150">
    <property type="entry name" value="ACYLPHOSPHATASE_1"/>
    <property type="match status" value="1"/>
</dbReference>
<dbReference type="PROSITE" id="PS00151">
    <property type="entry name" value="ACYLPHOSPHATASE_2"/>
    <property type="match status" value="1"/>
</dbReference>
<dbReference type="PROSITE" id="PS51160">
    <property type="entry name" value="ACYLPHOSPHATASE_3"/>
    <property type="match status" value="1"/>
</dbReference>
<accession>Q66CD9</accession>
<reference key="1">
    <citation type="journal article" date="2004" name="Proc. Natl. Acad. Sci. U.S.A.">
        <title>Insights into the evolution of Yersinia pestis through whole-genome comparison with Yersinia pseudotuberculosis.</title>
        <authorList>
            <person name="Chain P.S.G."/>
            <person name="Carniel E."/>
            <person name="Larimer F.W."/>
            <person name="Lamerdin J."/>
            <person name="Stoutland P.O."/>
            <person name="Regala W.M."/>
            <person name="Georgescu A.M."/>
            <person name="Vergez L.M."/>
            <person name="Land M.L."/>
            <person name="Motin V.L."/>
            <person name="Brubaker R.R."/>
            <person name="Fowler J."/>
            <person name="Hinnebusch J."/>
            <person name="Marceau M."/>
            <person name="Medigue C."/>
            <person name="Simonet M."/>
            <person name="Chenal-Francisque V."/>
            <person name="Souza B."/>
            <person name="Dacheux D."/>
            <person name="Elliott J.M."/>
            <person name="Derbise A."/>
            <person name="Hauser L.J."/>
            <person name="Garcia E."/>
        </authorList>
    </citation>
    <scope>NUCLEOTIDE SEQUENCE [LARGE SCALE GENOMIC DNA]</scope>
    <source>
        <strain>IP32953</strain>
    </source>
</reference>
<keyword id="KW-0378">Hydrolase</keyword>